<accession>Q9GZK3</accession>
<accession>B2RNH2</accession>
<accession>Q9GZL2</accession>
<accession>Q9Y299</accession>
<evidence type="ECO:0000255" key="1"/>
<evidence type="ECO:0000255" key="2">
    <source>
        <dbReference type="PROSITE-ProRule" id="PRU00521"/>
    </source>
</evidence>
<evidence type="ECO:0000269" key="3">
    <source ref="1"/>
</evidence>
<evidence type="ECO:0000305" key="4"/>
<proteinExistence type="evidence at transcript level"/>
<protein>
    <recommendedName>
        <fullName>Olfactory receptor 2B2</fullName>
    </recommendedName>
    <alternativeName>
        <fullName>Hs6M1-10</fullName>
    </alternativeName>
    <alternativeName>
        <fullName>Olfactory receptor 2B9</fullName>
    </alternativeName>
    <alternativeName>
        <fullName>Olfactory receptor 6-1</fullName>
        <shortName>OR6-1</shortName>
    </alternativeName>
</protein>
<keyword id="KW-1003">Cell membrane</keyword>
<keyword id="KW-1015">Disulfide bond</keyword>
<keyword id="KW-0297">G-protein coupled receptor</keyword>
<keyword id="KW-0325">Glycoprotein</keyword>
<keyword id="KW-0472">Membrane</keyword>
<keyword id="KW-0552">Olfaction</keyword>
<keyword id="KW-0675">Receptor</keyword>
<keyword id="KW-1185">Reference proteome</keyword>
<keyword id="KW-0716">Sensory transduction</keyword>
<keyword id="KW-0807">Transducer</keyword>
<keyword id="KW-0812">Transmembrane</keyword>
<keyword id="KW-1133">Transmembrane helix</keyword>
<comment type="function">
    <text evidence="4">Odorant receptor.</text>
</comment>
<comment type="subcellular location">
    <subcellularLocation>
        <location>Cell membrane</location>
        <topology>Multi-pass membrane protein</topology>
    </subcellularLocation>
</comment>
<comment type="similarity">
    <text evidence="2">Belongs to the G-protein coupled receptor 1 family.</text>
</comment>
<comment type="online information" name="Human Olfactory Receptor Data Exploratorium (HORDE)">
    <link uri="http://genome.weizmann.ac.il/horde/card/index/symbol:OR2B2"/>
</comment>
<feature type="chain" id="PRO_0000150460" description="Olfactory receptor 2B2">
    <location>
        <begin position="1"/>
        <end position="357"/>
    </location>
</feature>
<feature type="topological domain" description="Extracellular" evidence="1">
    <location>
        <begin position="1"/>
        <end position="25"/>
    </location>
</feature>
<feature type="transmembrane region" description="Helical; Name=1" evidence="1">
    <location>
        <begin position="26"/>
        <end position="49"/>
    </location>
</feature>
<feature type="topological domain" description="Cytoplasmic" evidence="1">
    <location>
        <begin position="50"/>
        <end position="57"/>
    </location>
</feature>
<feature type="transmembrane region" description="Helical; Name=2" evidence="1">
    <location>
        <begin position="58"/>
        <end position="79"/>
    </location>
</feature>
<feature type="topological domain" description="Extracellular" evidence="1">
    <location>
        <begin position="80"/>
        <end position="100"/>
    </location>
</feature>
<feature type="transmembrane region" description="Helical; Name=3" evidence="1">
    <location>
        <begin position="101"/>
        <end position="120"/>
    </location>
</feature>
<feature type="topological domain" description="Cytoplasmic" evidence="1">
    <location>
        <begin position="121"/>
        <end position="139"/>
    </location>
</feature>
<feature type="transmembrane region" description="Helical; Name=4" evidence="1">
    <location>
        <begin position="140"/>
        <end position="158"/>
    </location>
</feature>
<feature type="topological domain" description="Extracellular" evidence="1">
    <location>
        <begin position="159"/>
        <end position="195"/>
    </location>
</feature>
<feature type="transmembrane region" description="Helical; Name=5" evidence="1">
    <location>
        <begin position="196"/>
        <end position="219"/>
    </location>
</feature>
<feature type="topological domain" description="Cytoplasmic" evidence="1">
    <location>
        <begin position="220"/>
        <end position="236"/>
    </location>
</feature>
<feature type="transmembrane region" description="Helical; Name=6" evidence="1">
    <location>
        <begin position="237"/>
        <end position="259"/>
    </location>
</feature>
<feature type="topological domain" description="Extracellular" evidence="1">
    <location>
        <begin position="260"/>
        <end position="272"/>
    </location>
</feature>
<feature type="transmembrane region" description="Helical; Name=7" evidence="1">
    <location>
        <begin position="273"/>
        <end position="292"/>
    </location>
</feature>
<feature type="topological domain" description="Cytoplasmic" evidence="1">
    <location>
        <begin position="293"/>
        <end position="357"/>
    </location>
</feature>
<feature type="glycosylation site" description="N-linked (GlcNAc...) asparagine" evidence="1">
    <location>
        <position position="5"/>
    </location>
</feature>
<feature type="disulfide bond" evidence="2">
    <location>
        <begin position="97"/>
        <end position="189"/>
    </location>
</feature>
<feature type="sequence variant" id="VAR_057536" description="In dbSNP:rs9368537.">
    <original>A</original>
    <variation>P</variation>
    <location>
        <position position="183"/>
    </location>
</feature>
<feature type="sequence variant" id="VAR_010943" description="In allele 6M1-10*02; dbSNP:rs34957169." evidence="3">
    <original>Q</original>
    <variation>R</variation>
    <location>
        <position position="234"/>
    </location>
</feature>
<feature type="sequence variant" id="VAR_062014" description="In dbSNP:rs34788973.">
    <original>A</original>
    <variation>S</variation>
    <location>
        <position position="300"/>
    </location>
</feature>
<gene>
    <name type="primary">OR2B2</name>
    <name type="synonym">OR2B9</name>
</gene>
<sequence length="357" mass="40412">MNWVNKSVPQEFILLVFSDQPWLEIPPFVMFLFSYILTIFGNLTIILVSHVDFKLHTPMYFFLSNLSLLDLCYTTSTVPQMLVNICNTRKVISYGGCVAQLFIFLALGSTECLLLAVMCFDRFVAICRPLHYSIIMHQRLCFQLAAASWISGFSNSVLQSTWTLKMPLCGHKEVDHFFCEVPALLKLSCVDTTANEAELFFISVLFLLIPVTLILISYAFIVQAVLRIQSAEGQRKAFGTCGSHLIVVSLFYGTAISMYLQPPSPSSKDRGKMVSLFCGIIAPMLNPLIYTLRNKEVKEAFKRLVAKSLLNQEIRNMQMISFAKDTVLTYLTNFSASCPIFVITIENYCNLPQRKFP</sequence>
<organism>
    <name type="scientific">Homo sapiens</name>
    <name type="common">Human</name>
    <dbReference type="NCBI Taxonomy" id="9606"/>
    <lineage>
        <taxon>Eukaryota</taxon>
        <taxon>Metazoa</taxon>
        <taxon>Chordata</taxon>
        <taxon>Craniata</taxon>
        <taxon>Vertebrata</taxon>
        <taxon>Euteleostomi</taxon>
        <taxon>Mammalia</taxon>
        <taxon>Eutheria</taxon>
        <taxon>Euarchontoglires</taxon>
        <taxon>Primates</taxon>
        <taxon>Haplorrhini</taxon>
        <taxon>Catarrhini</taxon>
        <taxon>Hominidae</taxon>
        <taxon>Homo</taxon>
    </lineage>
</organism>
<name>OR2B2_HUMAN</name>
<reference key="1">
    <citation type="book" date="2000" name="Major histocompatibility complex-evolution, structure, and function">
        <title>Polymorphic olfactory receptor genes and HLA loci constitute extended haplotypes.</title>
        <editorList>
            <person name="Kasahara M."/>
        </editorList>
        <authorList>
            <person name="Ziegler A."/>
            <person name="Ehlers A."/>
            <person name="Forbes S.A."/>
            <person name="Trowsdale J."/>
            <person name="Uchanska-Ziegler B."/>
            <person name="Volz A."/>
            <person name="Younger R."/>
            <person name="Beck S."/>
        </authorList>
    </citation>
    <scope>NUCLEOTIDE SEQUENCE [GENOMIC DNA]</scope>
    <scope>VARIANT ARG-234</scope>
</reference>
<reference key="2">
    <citation type="journal article" date="2003" name="Nature">
        <title>The DNA sequence and analysis of human chromosome 6.</title>
        <authorList>
            <person name="Mungall A.J."/>
            <person name="Palmer S.A."/>
            <person name="Sims S.K."/>
            <person name="Edwards C.A."/>
            <person name="Ashurst J.L."/>
            <person name="Wilming L."/>
            <person name="Jones M.C."/>
            <person name="Horton R."/>
            <person name="Hunt S.E."/>
            <person name="Scott C.E."/>
            <person name="Gilbert J.G.R."/>
            <person name="Clamp M.E."/>
            <person name="Bethel G."/>
            <person name="Milne S."/>
            <person name="Ainscough R."/>
            <person name="Almeida J.P."/>
            <person name="Ambrose K.D."/>
            <person name="Andrews T.D."/>
            <person name="Ashwell R.I.S."/>
            <person name="Babbage A.K."/>
            <person name="Bagguley C.L."/>
            <person name="Bailey J."/>
            <person name="Banerjee R."/>
            <person name="Barker D.J."/>
            <person name="Barlow K.F."/>
            <person name="Bates K."/>
            <person name="Beare D.M."/>
            <person name="Beasley H."/>
            <person name="Beasley O."/>
            <person name="Bird C.P."/>
            <person name="Blakey S.E."/>
            <person name="Bray-Allen S."/>
            <person name="Brook J."/>
            <person name="Brown A.J."/>
            <person name="Brown J.Y."/>
            <person name="Burford D.C."/>
            <person name="Burrill W."/>
            <person name="Burton J."/>
            <person name="Carder C."/>
            <person name="Carter N.P."/>
            <person name="Chapman J.C."/>
            <person name="Clark S.Y."/>
            <person name="Clark G."/>
            <person name="Clee C.M."/>
            <person name="Clegg S."/>
            <person name="Cobley V."/>
            <person name="Collier R.E."/>
            <person name="Collins J.E."/>
            <person name="Colman L.K."/>
            <person name="Corby N.R."/>
            <person name="Coville G.J."/>
            <person name="Culley K.M."/>
            <person name="Dhami P."/>
            <person name="Davies J."/>
            <person name="Dunn M."/>
            <person name="Earthrowl M.E."/>
            <person name="Ellington A.E."/>
            <person name="Evans K.A."/>
            <person name="Faulkner L."/>
            <person name="Francis M.D."/>
            <person name="Frankish A."/>
            <person name="Frankland J."/>
            <person name="French L."/>
            <person name="Garner P."/>
            <person name="Garnett J."/>
            <person name="Ghori M.J."/>
            <person name="Gilby L.M."/>
            <person name="Gillson C.J."/>
            <person name="Glithero R.J."/>
            <person name="Grafham D.V."/>
            <person name="Grant M."/>
            <person name="Gribble S."/>
            <person name="Griffiths C."/>
            <person name="Griffiths M.N.D."/>
            <person name="Hall R."/>
            <person name="Halls K.S."/>
            <person name="Hammond S."/>
            <person name="Harley J.L."/>
            <person name="Hart E.A."/>
            <person name="Heath P.D."/>
            <person name="Heathcott R."/>
            <person name="Holmes S.J."/>
            <person name="Howden P.J."/>
            <person name="Howe K.L."/>
            <person name="Howell G.R."/>
            <person name="Huckle E."/>
            <person name="Humphray S.J."/>
            <person name="Humphries M.D."/>
            <person name="Hunt A.R."/>
            <person name="Johnson C.M."/>
            <person name="Joy A.A."/>
            <person name="Kay M."/>
            <person name="Keenan S.J."/>
            <person name="Kimberley A.M."/>
            <person name="King A."/>
            <person name="Laird G.K."/>
            <person name="Langford C."/>
            <person name="Lawlor S."/>
            <person name="Leongamornlert D.A."/>
            <person name="Leversha M."/>
            <person name="Lloyd C.R."/>
            <person name="Lloyd D.M."/>
            <person name="Loveland J.E."/>
            <person name="Lovell J."/>
            <person name="Martin S."/>
            <person name="Mashreghi-Mohammadi M."/>
            <person name="Maslen G.L."/>
            <person name="Matthews L."/>
            <person name="McCann O.T."/>
            <person name="McLaren S.J."/>
            <person name="McLay K."/>
            <person name="McMurray A."/>
            <person name="Moore M.J.F."/>
            <person name="Mullikin J.C."/>
            <person name="Niblett D."/>
            <person name="Nickerson T."/>
            <person name="Novik K.L."/>
            <person name="Oliver K."/>
            <person name="Overton-Larty E.K."/>
            <person name="Parker A."/>
            <person name="Patel R."/>
            <person name="Pearce A.V."/>
            <person name="Peck A.I."/>
            <person name="Phillimore B.J.C.T."/>
            <person name="Phillips S."/>
            <person name="Plumb R.W."/>
            <person name="Porter K.M."/>
            <person name="Ramsey Y."/>
            <person name="Ranby S.A."/>
            <person name="Rice C.M."/>
            <person name="Ross M.T."/>
            <person name="Searle S.M."/>
            <person name="Sehra H.K."/>
            <person name="Sheridan E."/>
            <person name="Skuce C.D."/>
            <person name="Smith S."/>
            <person name="Smith M."/>
            <person name="Spraggon L."/>
            <person name="Squares S.L."/>
            <person name="Steward C.A."/>
            <person name="Sycamore N."/>
            <person name="Tamlyn-Hall G."/>
            <person name="Tester J."/>
            <person name="Theaker A.J."/>
            <person name="Thomas D.W."/>
            <person name="Thorpe A."/>
            <person name="Tracey A."/>
            <person name="Tromans A."/>
            <person name="Tubby B."/>
            <person name="Wall M."/>
            <person name="Wallis J.M."/>
            <person name="West A.P."/>
            <person name="White S.S."/>
            <person name="Whitehead S.L."/>
            <person name="Whittaker H."/>
            <person name="Wild A."/>
            <person name="Willey D.J."/>
            <person name="Wilmer T.E."/>
            <person name="Wood J.M."/>
            <person name="Wray P.W."/>
            <person name="Wyatt J.C."/>
            <person name="Young L."/>
            <person name="Younger R.M."/>
            <person name="Bentley D.R."/>
            <person name="Coulson A."/>
            <person name="Durbin R.M."/>
            <person name="Hubbard T."/>
            <person name="Sulston J.E."/>
            <person name="Dunham I."/>
            <person name="Rogers J."/>
            <person name="Beck S."/>
        </authorList>
    </citation>
    <scope>NUCLEOTIDE SEQUENCE [LARGE SCALE GENOMIC DNA]</scope>
</reference>
<reference key="3">
    <citation type="submission" date="2005-07" db="EMBL/GenBank/DDBJ databases">
        <authorList>
            <person name="Mural R.J."/>
            <person name="Istrail S."/>
            <person name="Sutton G.G."/>
            <person name="Florea L."/>
            <person name="Halpern A.L."/>
            <person name="Mobarry C.M."/>
            <person name="Lippert R."/>
            <person name="Walenz B."/>
            <person name="Shatkay H."/>
            <person name="Dew I."/>
            <person name="Miller J.R."/>
            <person name="Flanigan M.J."/>
            <person name="Edwards N.J."/>
            <person name="Bolanos R."/>
            <person name="Fasulo D."/>
            <person name="Halldorsson B.V."/>
            <person name="Hannenhalli S."/>
            <person name="Turner R."/>
            <person name="Yooseph S."/>
            <person name="Lu F."/>
            <person name="Nusskern D.R."/>
            <person name="Shue B.C."/>
            <person name="Zheng X.H."/>
            <person name="Zhong F."/>
            <person name="Delcher A.L."/>
            <person name="Huson D.H."/>
            <person name="Kravitz S.A."/>
            <person name="Mouchard L."/>
            <person name="Reinert K."/>
            <person name="Remington K.A."/>
            <person name="Clark A.G."/>
            <person name="Waterman M.S."/>
            <person name="Eichler E.E."/>
            <person name="Adams M.D."/>
            <person name="Hunkapiller M.W."/>
            <person name="Myers E.W."/>
            <person name="Venter J.C."/>
        </authorList>
    </citation>
    <scope>NUCLEOTIDE SEQUENCE [LARGE SCALE GENOMIC DNA]</scope>
</reference>
<reference key="4">
    <citation type="journal article" date="2004" name="Genome Res.">
        <title>The status, quality, and expansion of the NIH full-length cDNA project: the Mammalian Gene Collection (MGC).</title>
        <authorList>
            <consortium name="The MGC Project Team"/>
        </authorList>
    </citation>
    <scope>NUCLEOTIDE SEQUENCE [LARGE SCALE MRNA]</scope>
</reference>
<dbReference type="EMBL" id="AJ302584">
    <property type="protein sequence ID" value="CAC20504.1"/>
    <property type="molecule type" value="Genomic_DNA"/>
</dbReference>
<dbReference type="EMBL" id="AJ302585">
    <property type="protein sequence ID" value="CAC20505.1"/>
    <property type="molecule type" value="Genomic_DNA"/>
</dbReference>
<dbReference type="EMBL" id="AJ302586">
    <property type="protein sequence ID" value="CAC20506.1"/>
    <property type="molecule type" value="Genomic_DNA"/>
</dbReference>
<dbReference type="EMBL" id="AJ302587">
    <property type="protein sequence ID" value="CAC20507.1"/>
    <property type="molecule type" value="Genomic_DNA"/>
</dbReference>
<dbReference type="EMBL" id="AJ302588">
    <property type="protein sequence ID" value="CAC20508.1"/>
    <property type="molecule type" value="Genomic_DNA"/>
</dbReference>
<dbReference type="EMBL" id="AJ302589">
    <property type="protein sequence ID" value="CAC20509.1"/>
    <property type="molecule type" value="Genomic_DNA"/>
</dbReference>
<dbReference type="EMBL" id="AJ302590">
    <property type="protein sequence ID" value="CAC20510.1"/>
    <property type="molecule type" value="Genomic_DNA"/>
</dbReference>
<dbReference type="EMBL" id="AJ302591">
    <property type="protein sequence ID" value="CAC20511.1"/>
    <property type="molecule type" value="Genomic_DNA"/>
</dbReference>
<dbReference type="EMBL" id="AJ302592">
    <property type="protein sequence ID" value="CAC20512.1"/>
    <property type="molecule type" value="Genomic_DNA"/>
</dbReference>
<dbReference type="EMBL" id="AJ302593">
    <property type="protein sequence ID" value="CAC20513.1"/>
    <property type="molecule type" value="Genomic_DNA"/>
</dbReference>
<dbReference type="EMBL" id="Z98744">
    <property type="status" value="NOT_ANNOTATED_CDS"/>
    <property type="molecule type" value="Genomic_DNA"/>
</dbReference>
<dbReference type="EMBL" id="CH471081">
    <property type="protein sequence ID" value="EAX03125.1"/>
    <property type="molecule type" value="Genomic_DNA"/>
</dbReference>
<dbReference type="EMBL" id="BC136881">
    <property type="protein sequence ID" value="AAI36882.1"/>
    <property type="molecule type" value="mRNA"/>
</dbReference>
<dbReference type="EMBL" id="BC136901">
    <property type="protein sequence ID" value="AAI36902.1"/>
    <property type="molecule type" value="mRNA"/>
</dbReference>
<dbReference type="CCDS" id="CCDS4641.1"/>
<dbReference type="RefSeq" id="NP_149046.2">
    <property type="nucleotide sequence ID" value="NM_033057.2"/>
</dbReference>
<dbReference type="SMR" id="Q9GZK3"/>
<dbReference type="FunCoup" id="Q9GZK3">
    <property type="interactions" value="485"/>
</dbReference>
<dbReference type="STRING" id="9606.ENSP00000304419"/>
<dbReference type="GlyCosmos" id="Q9GZK3">
    <property type="glycosylation" value="1 site, No reported glycans"/>
</dbReference>
<dbReference type="GlyGen" id="Q9GZK3">
    <property type="glycosylation" value="1 site"/>
</dbReference>
<dbReference type="iPTMnet" id="Q9GZK3"/>
<dbReference type="PhosphoSitePlus" id="Q9GZK3"/>
<dbReference type="BioMuta" id="OR2B2"/>
<dbReference type="DMDM" id="14423800"/>
<dbReference type="PaxDb" id="9606-ENSP00000304419"/>
<dbReference type="Antibodypedia" id="25824">
    <property type="antibodies" value="63 antibodies from 18 providers"/>
</dbReference>
<dbReference type="DNASU" id="81697"/>
<dbReference type="Ensembl" id="ENST00000303324.4">
    <property type="protein sequence ID" value="ENSP00000304419.2"/>
    <property type="gene ID" value="ENSG00000168131.4"/>
</dbReference>
<dbReference type="GeneID" id="81697"/>
<dbReference type="KEGG" id="hsa:81697"/>
<dbReference type="MANE-Select" id="ENST00000303324.4">
    <property type="protein sequence ID" value="ENSP00000304419.2"/>
    <property type="RefSeq nucleotide sequence ID" value="NM_033057.2"/>
    <property type="RefSeq protein sequence ID" value="NP_149046.2"/>
</dbReference>
<dbReference type="UCSC" id="uc011dkw.2">
    <property type="organism name" value="human"/>
</dbReference>
<dbReference type="AGR" id="HGNC:13966"/>
<dbReference type="CTD" id="81697"/>
<dbReference type="DisGeNET" id="81697"/>
<dbReference type="GeneCards" id="OR2B2"/>
<dbReference type="HGNC" id="HGNC:13966">
    <property type="gene designation" value="OR2B2"/>
</dbReference>
<dbReference type="HPA" id="ENSG00000168131">
    <property type="expression patterns" value="Not detected"/>
</dbReference>
<dbReference type="neXtProt" id="NX_Q9GZK3"/>
<dbReference type="PharmGKB" id="PA32141"/>
<dbReference type="VEuPathDB" id="HostDB:ENSG00000168131"/>
<dbReference type="eggNOG" id="ENOG502SI2C">
    <property type="taxonomic scope" value="Eukaryota"/>
</dbReference>
<dbReference type="GeneTree" id="ENSGT01130000278264"/>
<dbReference type="HOGENOM" id="CLU_012526_1_2_1"/>
<dbReference type="InParanoid" id="Q9GZK3"/>
<dbReference type="OMA" id="PLCGHRE"/>
<dbReference type="OrthoDB" id="5950740at2759"/>
<dbReference type="PAN-GO" id="Q9GZK3">
    <property type="GO annotations" value="0 GO annotations based on evolutionary models"/>
</dbReference>
<dbReference type="PhylomeDB" id="Q9GZK3"/>
<dbReference type="TreeFam" id="TF336512"/>
<dbReference type="PathwayCommons" id="Q9GZK3"/>
<dbReference type="Reactome" id="R-HSA-9752946">
    <property type="pathway name" value="Expression and translocation of olfactory receptors"/>
</dbReference>
<dbReference type="BioGRID-ORCS" id="81697">
    <property type="hits" value="12 hits in 735 CRISPR screens"/>
</dbReference>
<dbReference type="GeneWiki" id="OR2B2"/>
<dbReference type="GenomeRNAi" id="81697"/>
<dbReference type="Pharos" id="Q9GZK3">
    <property type="development level" value="Tdark"/>
</dbReference>
<dbReference type="PRO" id="PR:Q9GZK3"/>
<dbReference type="Proteomes" id="UP000005640">
    <property type="component" value="Chromosome 6"/>
</dbReference>
<dbReference type="RNAct" id="Q9GZK3">
    <property type="molecule type" value="protein"/>
</dbReference>
<dbReference type="Bgee" id="ENSG00000168131">
    <property type="expression patterns" value="Expressed in tibialis anterior and 7 other cell types or tissues"/>
</dbReference>
<dbReference type="ExpressionAtlas" id="Q9GZK3">
    <property type="expression patterns" value="baseline and differential"/>
</dbReference>
<dbReference type="GO" id="GO:0005886">
    <property type="term" value="C:plasma membrane"/>
    <property type="evidence" value="ECO:0000318"/>
    <property type="project" value="GO_Central"/>
</dbReference>
<dbReference type="GO" id="GO:0004930">
    <property type="term" value="F:G protein-coupled receptor activity"/>
    <property type="evidence" value="ECO:0007669"/>
    <property type="project" value="UniProtKB-KW"/>
</dbReference>
<dbReference type="GO" id="GO:0004984">
    <property type="term" value="F:olfactory receptor activity"/>
    <property type="evidence" value="ECO:0000318"/>
    <property type="project" value="GO_Central"/>
</dbReference>
<dbReference type="GO" id="GO:0050911">
    <property type="term" value="P:detection of chemical stimulus involved in sensory perception of smell"/>
    <property type="evidence" value="ECO:0000318"/>
    <property type="project" value="GO_Central"/>
</dbReference>
<dbReference type="CDD" id="cd15432">
    <property type="entry name" value="7tmA_OR2B2-like"/>
    <property type="match status" value="1"/>
</dbReference>
<dbReference type="FunFam" id="1.10.1220.70:FF:000001">
    <property type="entry name" value="Olfactory receptor"/>
    <property type="match status" value="1"/>
</dbReference>
<dbReference type="FunFam" id="1.20.1070.10:FF:000005">
    <property type="entry name" value="Olfactory receptor"/>
    <property type="match status" value="1"/>
</dbReference>
<dbReference type="Gene3D" id="1.20.1070.10">
    <property type="entry name" value="Rhodopsin 7-helix transmembrane proteins"/>
    <property type="match status" value="1"/>
</dbReference>
<dbReference type="InterPro" id="IPR000276">
    <property type="entry name" value="GPCR_Rhodpsn"/>
</dbReference>
<dbReference type="InterPro" id="IPR017452">
    <property type="entry name" value="GPCR_Rhodpsn_7TM"/>
</dbReference>
<dbReference type="InterPro" id="IPR000725">
    <property type="entry name" value="Olfact_rcpt"/>
</dbReference>
<dbReference type="PANTHER" id="PTHR26453">
    <property type="entry name" value="OLFACTORY RECEPTOR"/>
    <property type="match status" value="1"/>
</dbReference>
<dbReference type="Pfam" id="PF13853">
    <property type="entry name" value="7tm_4"/>
    <property type="match status" value="1"/>
</dbReference>
<dbReference type="PRINTS" id="PR00237">
    <property type="entry name" value="GPCRRHODOPSN"/>
</dbReference>
<dbReference type="PRINTS" id="PR00245">
    <property type="entry name" value="OLFACTORYR"/>
</dbReference>
<dbReference type="SUPFAM" id="SSF81321">
    <property type="entry name" value="Family A G protein-coupled receptor-like"/>
    <property type="match status" value="1"/>
</dbReference>
<dbReference type="PROSITE" id="PS00237">
    <property type="entry name" value="G_PROTEIN_RECEP_F1_1"/>
    <property type="match status" value="1"/>
</dbReference>
<dbReference type="PROSITE" id="PS50262">
    <property type="entry name" value="G_PROTEIN_RECEP_F1_2"/>
    <property type="match status" value="1"/>
</dbReference>